<sequence>MATLSQPQSALPKTKIATTFGLSKDLKSPISVKVCYLECTRNNVSLVPLSTKFEDPTVFKKLSQIYKNSDLFVEIRVYDGKNNNLISTPVRTSYKAFNNKGRTWNQQLKLNIDYNQISIDAYLKFSICEIIDTKPSVFGVSYLSLFSHDSSTLRSGSHKIPVFMEDDPQYSKNIQYGTLIGLTDLEKRLIDYENGKYPRLNWLDKMVLPKVDATFLKTNNKDHDYYLYIELPQFEFPIVYSDIIYQIPTIEPITETTSKIPPDDTLNSNIIINSIDIPMATSHDPSIMKVYDPDFHITANNHLNPNATTFDPVELKYRKLERNIDNNTILDKELKPTPQLRDELLRIMIKPSNAELTDNEKNLIWKFRYYFSKNNSGNDPSNKSVKSFLPKFLRSINWENDYELDHTFKEIIPFYWNVDKLQIGDALELLGDYFNPYTLGKPTYQDDSMTSKSSKMKSDEKRFIKIYNNVCFLRKLAVERLKLANSEELLLYLLQLVQALKYEALIYEKSPPFCERSDQIEDNASSTLKSPLADFLIERAVENEKLGNFFYWYVKVENEDQLNNPHIDGPIKIYMDILNRYIELLKAHCHENRLPYYKHLKHQIWFIKKLTSLVELLRASFKKNEATAKKVEYLREYLANSGNELLKFPEPFPLPLDPSVMICGCYPEESSVFKSSLAPLKITLKTIEKKKHGHATSQLFGKRSRYGKYPLMFKIGDDLRQDQLVIQIIDLMDQLLKNENLDLKLTPYKILATSPISGLIQFVPNETLDSILSKTYPTSVTYSGGGETSDVPPSVSNNGILNYLRLHSQEQQSEEPISKSILSTNTSQSNTEIPVLPRQPKPTITSDLGVSPILMDNYVKSCAGYCVITYILGVGDRHLDNLLLSPNGKFWHADFGYILGRDPKPFPPLMKLPIQVIDGMGGLHHENYNVFKSYCFITYTTLRKNSNLILNLFQLMLDANIPDIQFDPSRVIEKVQEKFCLQMTEEEAILHFQNLINDSVNAFLPVVIDRLHSLAQYWRA</sequence>
<dbReference type="EC" id="2.7.1.137" evidence="5 7"/>
<dbReference type="EMBL" id="CP017623">
    <property type="protein sequence ID" value="AOW26324.1"/>
    <property type="molecule type" value="Genomic_DNA"/>
</dbReference>
<dbReference type="RefSeq" id="XP_718832.2">
    <property type="nucleotide sequence ID" value="XM_713739.2"/>
</dbReference>
<dbReference type="SMR" id="A0A1D8PDV7"/>
<dbReference type="FunCoup" id="A0A1D8PDV7">
    <property type="interactions" value="868"/>
</dbReference>
<dbReference type="STRING" id="237561.A0A1D8PDV7"/>
<dbReference type="EnsemblFungi" id="C1_06680W_A-T">
    <property type="protein sequence ID" value="C1_06680W_A-T-p1"/>
    <property type="gene ID" value="C1_06680W_A"/>
</dbReference>
<dbReference type="GeneID" id="3639540"/>
<dbReference type="KEGG" id="cal:CAALFM_C106680WA"/>
<dbReference type="CGD" id="CAL0000195103">
    <property type="gene designation" value="VPS34"/>
</dbReference>
<dbReference type="VEuPathDB" id="FungiDB:C1_06680W_A"/>
<dbReference type="eggNOG" id="KOG0906">
    <property type="taxonomic scope" value="Eukaryota"/>
</dbReference>
<dbReference type="InParanoid" id="A0A1D8PDV7"/>
<dbReference type="OrthoDB" id="67688at2759"/>
<dbReference type="Proteomes" id="UP000000559">
    <property type="component" value="Chromosome 1"/>
</dbReference>
<dbReference type="GO" id="GO:0005737">
    <property type="term" value="C:cytoplasm"/>
    <property type="evidence" value="ECO:0000318"/>
    <property type="project" value="GO_Central"/>
</dbReference>
<dbReference type="GO" id="GO:0005768">
    <property type="term" value="C:endosome"/>
    <property type="evidence" value="ECO:0000318"/>
    <property type="project" value="GO_Central"/>
</dbReference>
<dbReference type="GO" id="GO:0010008">
    <property type="term" value="C:endosome membrane"/>
    <property type="evidence" value="ECO:0007669"/>
    <property type="project" value="UniProtKB-SubCell"/>
</dbReference>
<dbReference type="GO" id="GO:0000329">
    <property type="term" value="C:fungal-type vacuole membrane"/>
    <property type="evidence" value="ECO:0007669"/>
    <property type="project" value="EnsemblFungi"/>
</dbReference>
<dbReference type="GO" id="GO:0005794">
    <property type="term" value="C:Golgi apparatus"/>
    <property type="evidence" value="ECO:0007669"/>
    <property type="project" value="UniProtKB-SubCell"/>
</dbReference>
<dbReference type="GO" id="GO:0016020">
    <property type="term" value="C:membrane"/>
    <property type="evidence" value="ECO:0000318"/>
    <property type="project" value="GO_Central"/>
</dbReference>
<dbReference type="GO" id="GO:0071561">
    <property type="term" value="C:nucleus-vacuole junction"/>
    <property type="evidence" value="ECO:0007669"/>
    <property type="project" value="EnsemblFungi"/>
</dbReference>
<dbReference type="GO" id="GO:0005777">
    <property type="term" value="C:peroxisome"/>
    <property type="evidence" value="ECO:0000318"/>
    <property type="project" value="GO_Central"/>
</dbReference>
<dbReference type="GO" id="GO:0000407">
    <property type="term" value="C:phagophore assembly site"/>
    <property type="evidence" value="ECO:0000318"/>
    <property type="project" value="GO_Central"/>
</dbReference>
<dbReference type="GO" id="GO:0034271">
    <property type="term" value="C:phosphatidylinositol 3-kinase complex, class III, type I"/>
    <property type="evidence" value="ECO:0000318"/>
    <property type="project" value="GO_Central"/>
</dbReference>
<dbReference type="GO" id="GO:0034272">
    <property type="term" value="C:phosphatidylinositol 3-kinase complex, class III, type II"/>
    <property type="evidence" value="ECO:0000318"/>
    <property type="project" value="GO_Central"/>
</dbReference>
<dbReference type="GO" id="GO:0016303">
    <property type="term" value="F:1-phosphatidylinositol-3-kinase activity"/>
    <property type="evidence" value="ECO:0000314"/>
    <property type="project" value="CGD"/>
</dbReference>
<dbReference type="GO" id="GO:0005524">
    <property type="term" value="F:ATP binding"/>
    <property type="evidence" value="ECO:0007669"/>
    <property type="project" value="UniProtKB-KW"/>
</dbReference>
<dbReference type="GO" id="GO:0004672">
    <property type="term" value="F:protein kinase activity"/>
    <property type="evidence" value="ECO:0000314"/>
    <property type="project" value="CGD"/>
</dbReference>
<dbReference type="GO" id="GO:0032120">
    <property type="term" value="P:ascospore-type prospore membrane formation"/>
    <property type="evidence" value="ECO:0007669"/>
    <property type="project" value="EnsemblFungi"/>
</dbReference>
<dbReference type="GO" id="GO:0000045">
    <property type="term" value="P:autophagosome assembly"/>
    <property type="evidence" value="ECO:0000318"/>
    <property type="project" value="GO_Central"/>
</dbReference>
<dbReference type="GO" id="GO:0006914">
    <property type="term" value="P:autophagy"/>
    <property type="evidence" value="ECO:0000315"/>
    <property type="project" value="CGD"/>
</dbReference>
<dbReference type="GO" id="GO:0071470">
    <property type="term" value="P:cellular response to osmotic stress"/>
    <property type="evidence" value="ECO:0000315"/>
    <property type="project" value="CGD"/>
</dbReference>
<dbReference type="GO" id="GO:0051365">
    <property type="term" value="P:cellular response to potassium ion starvation"/>
    <property type="evidence" value="ECO:0007669"/>
    <property type="project" value="EnsemblFungi"/>
</dbReference>
<dbReference type="GO" id="GO:0009267">
    <property type="term" value="P:cellular response to starvation"/>
    <property type="evidence" value="ECO:0000315"/>
    <property type="project" value="CGD"/>
</dbReference>
<dbReference type="GO" id="GO:0006897">
    <property type="term" value="P:endocytosis"/>
    <property type="evidence" value="ECO:0000315"/>
    <property type="project" value="CGD"/>
</dbReference>
<dbReference type="GO" id="GO:0030447">
    <property type="term" value="P:filamentous growth"/>
    <property type="evidence" value="ECO:0000315"/>
    <property type="project" value="CGD"/>
</dbReference>
<dbReference type="GO" id="GO:0036180">
    <property type="term" value="P:filamentous growth of a population of unicellular organisms in response to biotic stimulus"/>
    <property type="evidence" value="ECO:0000315"/>
    <property type="project" value="CGD"/>
</dbReference>
<dbReference type="GO" id="GO:0036170">
    <property type="term" value="P:filamentous growth of a population of unicellular organisms in response to starvation"/>
    <property type="evidence" value="ECO:0000315"/>
    <property type="project" value="CGD"/>
</dbReference>
<dbReference type="GO" id="GO:0000280">
    <property type="term" value="P:nuclear division"/>
    <property type="evidence" value="ECO:0000315"/>
    <property type="project" value="CGD"/>
</dbReference>
<dbReference type="GO" id="GO:0030473">
    <property type="term" value="P:nuclear migration along microtubule"/>
    <property type="evidence" value="ECO:0000315"/>
    <property type="project" value="CGD"/>
</dbReference>
<dbReference type="GO" id="GO:0000425">
    <property type="term" value="P:pexophagy"/>
    <property type="evidence" value="ECO:0000318"/>
    <property type="project" value="GO_Central"/>
</dbReference>
<dbReference type="GO" id="GO:0046854">
    <property type="term" value="P:phosphatidylinositol phosphate biosynthetic process"/>
    <property type="evidence" value="ECO:0000314"/>
    <property type="project" value="CGD"/>
</dbReference>
<dbReference type="GO" id="GO:0036092">
    <property type="term" value="P:phosphatidylinositol-3-phosphate biosynthetic process"/>
    <property type="evidence" value="ECO:0000318"/>
    <property type="project" value="GO_Central"/>
</dbReference>
<dbReference type="GO" id="GO:0048015">
    <property type="term" value="P:phosphatidylinositol-mediated signaling"/>
    <property type="evidence" value="ECO:0000318"/>
    <property type="project" value="GO_Central"/>
</dbReference>
<dbReference type="GO" id="GO:0032968">
    <property type="term" value="P:positive regulation of transcription elongation by RNA polymerase II"/>
    <property type="evidence" value="ECO:0007669"/>
    <property type="project" value="EnsemblFungi"/>
</dbReference>
<dbReference type="GO" id="GO:0006624">
    <property type="term" value="P:vacuolar protein processing"/>
    <property type="evidence" value="ECO:0000315"/>
    <property type="project" value="CGD"/>
</dbReference>
<dbReference type="GO" id="GO:0007034">
    <property type="term" value="P:vacuolar transport"/>
    <property type="evidence" value="ECO:0000315"/>
    <property type="project" value="CGD"/>
</dbReference>
<dbReference type="GO" id="GO:0007033">
    <property type="term" value="P:vacuole organization"/>
    <property type="evidence" value="ECO:0000315"/>
    <property type="project" value="CGD"/>
</dbReference>
<dbReference type="GO" id="GO:0016192">
    <property type="term" value="P:vesicle-mediated transport"/>
    <property type="evidence" value="ECO:0000315"/>
    <property type="project" value="CGD"/>
</dbReference>
<dbReference type="CDD" id="cd08397">
    <property type="entry name" value="C2_PI3K_class_III"/>
    <property type="match status" value="1"/>
</dbReference>
<dbReference type="CDD" id="cd00870">
    <property type="entry name" value="PI3Ka_III"/>
    <property type="match status" value="1"/>
</dbReference>
<dbReference type="CDD" id="cd00896">
    <property type="entry name" value="PI3Kc_III"/>
    <property type="match status" value="1"/>
</dbReference>
<dbReference type="FunFam" id="1.10.1070.11:FF:000002">
    <property type="entry name" value="Phosphatidylinositol 3-kinase catalytic subunit type 3"/>
    <property type="match status" value="1"/>
</dbReference>
<dbReference type="FunFam" id="3.30.1010.10:FF:000002">
    <property type="entry name" value="Phosphatidylinositol 3-kinase catalytic subunit type 3"/>
    <property type="match status" value="1"/>
</dbReference>
<dbReference type="Gene3D" id="2.60.40.150">
    <property type="entry name" value="C2 domain"/>
    <property type="match status" value="1"/>
</dbReference>
<dbReference type="Gene3D" id="1.10.1070.11">
    <property type="entry name" value="Phosphatidylinositol 3-/4-kinase, catalytic domain"/>
    <property type="match status" value="1"/>
</dbReference>
<dbReference type="Gene3D" id="3.30.1010.10">
    <property type="entry name" value="Phosphatidylinositol 3-kinase Catalytic Subunit, Chain A, domain 4"/>
    <property type="match status" value="1"/>
</dbReference>
<dbReference type="Gene3D" id="1.25.40.70">
    <property type="entry name" value="Phosphatidylinositol 3-kinase, accessory domain (PIK)"/>
    <property type="match status" value="1"/>
</dbReference>
<dbReference type="InterPro" id="IPR016024">
    <property type="entry name" value="ARM-type_fold"/>
</dbReference>
<dbReference type="InterPro" id="IPR035892">
    <property type="entry name" value="C2_domain_sf"/>
</dbReference>
<dbReference type="InterPro" id="IPR011009">
    <property type="entry name" value="Kinase-like_dom_sf"/>
</dbReference>
<dbReference type="InterPro" id="IPR000403">
    <property type="entry name" value="PI3/4_kinase_cat_dom"/>
</dbReference>
<dbReference type="InterPro" id="IPR036940">
    <property type="entry name" value="PI3/4_kinase_cat_sf"/>
</dbReference>
<dbReference type="InterPro" id="IPR018936">
    <property type="entry name" value="PI3/4_kinase_CS"/>
</dbReference>
<dbReference type="InterPro" id="IPR002420">
    <property type="entry name" value="PI3K-type_C2_dom"/>
</dbReference>
<dbReference type="InterPro" id="IPR001263">
    <property type="entry name" value="PI3K_accessory_dom"/>
</dbReference>
<dbReference type="InterPro" id="IPR042236">
    <property type="entry name" value="PI3K_accessory_sf"/>
</dbReference>
<dbReference type="InterPro" id="IPR008290">
    <property type="entry name" value="PI3K_Vps34"/>
</dbReference>
<dbReference type="InterPro" id="IPR015433">
    <property type="entry name" value="PI_Kinase"/>
</dbReference>
<dbReference type="PANTHER" id="PTHR10048:SF7">
    <property type="entry name" value="PHOSPHATIDYLINOSITOL 3-KINASE CATALYTIC SUBUNIT TYPE 3"/>
    <property type="match status" value="1"/>
</dbReference>
<dbReference type="PANTHER" id="PTHR10048">
    <property type="entry name" value="PHOSPHATIDYLINOSITOL KINASE"/>
    <property type="match status" value="1"/>
</dbReference>
<dbReference type="Pfam" id="PF00454">
    <property type="entry name" value="PI3_PI4_kinase"/>
    <property type="match status" value="1"/>
</dbReference>
<dbReference type="Pfam" id="PF00792">
    <property type="entry name" value="PI3K_C2"/>
    <property type="match status" value="1"/>
</dbReference>
<dbReference type="Pfam" id="PF00613">
    <property type="entry name" value="PI3Ka"/>
    <property type="match status" value="2"/>
</dbReference>
<dbReference type="PIRSF" id="PIRSF000587">
    <property type="entry name" value="PI3K_Vps34"/>
    <property type="match status" value="1"/>
</dbReference>
<dbReference type="SMART" id="SM00142">
    <property type="entry name" value="PI3K_C2"/>
    <property type="match status" value="1"/>
</dbReference>
<dbReference type="SMART" id="SM00145">
    <property type="entry name" value="PI3Ka"/>
    <property type="match status" value="1"/>
</dbReference>
<dbReference type="SMART" id="SM00146">
    <property type="entry name" value="PI3Kc"/>
    <property type="match status" value="1"/>
</dbReference>
<dbReference type="SUPFAM" id="SSF48371">
    <property type="entry name" value="ARM repeat"/>
    <property type="match status" value="1"/>
</dbReference>
<dbReference type="SUPFAM" id="SSF49562">
    <property type="entry name" value="C2 domain (Calcium/lipid-binding domain, CaLB)"/>
    <property type="match status" value="1"/>
</dbReference>
<dbReference type="SUPFAM" id="SSF56112">
    <property type="entry name" value="Protein kinase-like (PK-like)"/>
    <property type="match status" value="1"/>
</dbReference>
<dbReference type="PROSITE" id="PS51547">
    <property type="entry name" value="C2_PI3K"/>
    <property type="match status" value="1"/>
</dbReference>
<dbReference type="PROSITE" id="PS00915">
    <property type="entry name" value="PI3_4_KINASE_1"/>
    <property type="match status" value="1"/>
</dbReference>
<dbReference type="PROSITE" id="PS00916">
    <property type="entry name" value="PI3_4_KINASE_2"/>
    <property type="match status" value="1"/>
</dbReference>
<dbReference type="PROSITE" id="PS50290">
    <property type="entry name" value="PI3_4_KINASE_3"/>
    <property type="match status" value="1"/>
</dbReference>
<dbReference type="PROSITE" id="PS51545">
    <property type="entry name" value="PIK_HELICAL"/>
    <property type="match status" value="1"/>
</dbReference>
<keyword id="KW-0067">ATP-binding</keyword>
<keyword id="KW-0967">Endosome</keyword>
<keyword id="KW-0333">Golgi apparatus</keyword>
<keyword id="KW-0418">Kinase</keyword>
<keyword id="KW-0472">Membrane</keyword>
<keyword id="KW-0547">Nucleotide-binding</keyword>
<keyword id="KW-1185">Reference proteome</keyword>
<keyword id="KW-0808">Transferase</keyword>
<accession>A0A1D8PDV7</accession>
<organism>
    <name type="scientific">Candida albicans (strain SC5314 / ATCC MYA-2876)</name>
    <name type="common">Yeast</name>
    <dbReference type="NCBI Taxonomy" id="237561"/>
    <lineage>
        <taxon>Eukaryota</taxon>
        <taxon>Fungi</taxon>
        <taxon>Dikarya</taxon>
        <taxon>Ascomycota</taxon>
        <taxon>Saccharomycotina</taxon>
        <taxon>Pichiomycetes</taxon>
        <taxon>Debaryomycetaceae</taxon>
        <taxon>Candida/Lodderomyces clade</taxon>
        <taxon>Candida</taxon>
    </lineage>
</organism>
<evidence type="ECO:0000250" key="1">
    <source>
        <dbReference type="UniProtKB" id="P22543"/>
    </source>
</evidence>
<evidence type="ECO:0000255" key="2">
    <source>
        <dbReference type="PROSITE-ProRule" id="PRU00269"/>
    </source>
</evidence>
<evidence type="ECO:0000255" key="3">
    <source>
        <dbReference type="PROSITE-ProRule" id="PRU00878"/>
    </source>
</evidence>
<evidence type="ECO:0000255" key="4">
    <source>
        <dbReference type="PROSITE-ProRule" id="PRU00880"/>
    </source>
</evidence>
<evidence type="ECO:0000269" key="5">
    <source>
    </source>
</evidence>
<evidence type="ECO:0000269" key="6">
    <source>
    </source>
</evidence>
<evidence type="ECO:0000269" key="7">
    <source>
    </source>
</evidence>
<evidence type="ECO:0000269" key="8">
    <source>
    </source>
</evidence>
<evidence type="ECO:0000303" key="9">
    <source>
    </source>
</evidence>
<proteinExistence type="evidence at protein level"/>
<name>VPS34_CANAL</name>
<comment type="function">
    <text evidence="1 6 7 8">Multifunctional phosphatidylinositol 3-kinase involved in acidification of vacuoles, pH-dependent cell growth, and autophagocytosis (PubMed:15632428, PubMed:15861817). Plays an important role in protein transport and virulence (PubMed:11223944, PubMed:15632428). Component of the autophagy-specific VPS34 PI3-kinase complex I essential to recruit the ATG8-phosphatidylinositol conjugate and the ATG12-ATG5 conjugate to the pre-autophagosomal structure (By similarity). Also involved in endosome-to-Golgi retrograde transport as part of the VPS34 PI3-kinase complex II (By similarity). This second complex is required for the endosome-to-Golgi retrieval of PEP1 and KEX2, and the recruitment of VPS5 and VPS7, two components of the retromer complex, to endosomal membranes (probably through the synthesis of a specific pool of phosphatidylinositol 3-phosphate recruiting the retromer to the endosomes) (By similarity). Finally, it might also be involved in ethanol tolerance and cell wall integrity (By similarity).</text>
</comment>
<comment type="catalytic activity">
    <reaction evidence="5 7">
        <text>a 1,2-diacyl-sn-glycero-3-phospho-(1D-myo-inositol) + ATP = a 1,2-diacyl-sn-glycero-3-phospho-(1D-myo-inositol-3-phosphate) + ADP + H(+)</text>
        <dbReference type="Rhea" id="RHEA:12709"/>
        <dbReference type="ChEBI" id="CHEBI:15378"/>
        <dbReference type="ChEBI" id="CHEBI:30616"/>
        <dbReference type="ChEBI" id="CHEBI:57880"/>
        <dbReference type="ChEBI" id="CHEBI:58088"/>
        <dbReference type="ChEBI" id="CHEBI:456216"/>
        <dbReference type="EC" id="2.7.1.137"/>
    </reaction>
    <physiologicalReaction direction="left-to-right" evidence="5 7">
        <dbReference type="Rhea" id="RHEA:12710"/>
    </physiologicalReaction>
</comment>
<comment type="subunit">
    <text evidence="1 8">Component of the autophagy-specific VPS34 PI3-kinase complex I composed of at least VPS15, VPS30, VPS34, and of the VPS34 PI3-kinase complex II composed of VPS15, VPS30, VPS34 and VPS38 (By similarity). Interacts with VMNA7 (PubMed:15861817).</text>
</comment>
<comment type="subcellular location">
    <subcellularLocation>
        <location evidence="1">Golgi apparatus</location>
        <location evidence="1">trans-Golgi network membrane</location>
        <topology evidence="1">Peripheral membrane protein</topology>
    </subcellularLocation>
    <subcellularLocation>
        <location evidence="1">Endosome membrane</location>
        <topology evidence="1">Peripheral membrane protein</topology>
    </subcellularLocation>
</comment>
<comment type="induction">
    <text evidence="5">Expression is increased up to 12-fold during exponential growth, followed by a decline upon entry into stationary phase.</text>
</comment>
<comment type="PTM">
    <text evidence="7">Autophosphorylated.</text>
</comment>
<comment type="disruption phenotype">
    <text evidence="6 7 8">Leads to defective acidification of the vacuoles and a lack of growth at pH 8.0 (PubMed:15861817). Vacuoles are considerably enlarged and electron-transparent (PubMed:11223944). Shows aberrant patch-like accumulation of vesicles, which are localized in the periplasm close to the plasma membrane (PubMed:11223944). Shows a staining of punctuate structures, possibly multivesicular bodies (MVB), that are scattered all over the cell, the result of a late block in endocytic vesicle transport (PubMed:11223944). Results in significantly lower carboxypeptidase Y activity (PubMed:11223944). Causes disturbance of normal nuclear migration (PubMed:11223944). Also leads to avirulence in mice (PubMed:15632428).</text>
</comment>
<comment type="similarity">
    <text evidence="4">Belongs to the PI3/PI4-kinase family.</text>
</comment>
<protein>
    <recommendedName>
        <fullName evidence="9">Phosphatidylinositol 3-kinase VPS34</fullName>
        <shortName evidence="9">PI3-kinase VPS34</shortName>
        <shortName evidence="9">PI3K VPS34</shortName>
        <shortName evidence="9">PtdIns-3-kinase VPS34</shortName>
        <ecNumber evidence="5 7">2.7.1.137</ecNumber>
    </recommendedName>
    <alternativeName>
        <fullName evidence="9">Vacuolar protein sorting-associated protein 34</fullName>
    </alternativeName>
</protein>
<reference key="1">
    <citation type="journal article" date="2004" name="Proc. Natl. Acad. Sci. U.S.A.">
        <title>The diploid genome sequence of Candida albicans.</title>
        <authorList>
            <person name="Jones T."/>
            <person name="Federspiel N.A."/>
            <person name="Chibana H."/>
            <person name="Dungan J."/>
            <person name="Kalman S."/>
            <person name="Magee B.B."/>
            <person name="Newport G."/>
            <person name="Thorstenson Y.R."/>
            <person name="Agabian N."/>
            <person name="Magee P.T."/>
            <person name="Davis R.W."/>
            <person name="Scherer S."/>
        </authorList>
    </citation>
    <scope>NUCLEOTIDE SEQUENCE [LARGE SCALE GENOMIC DNA]</scope>
    <source>
        <strain>SC5314 / ATCC MYA-2876</strain>
    </source>
</reference>
<reference key="2">
    <citation type="journal article" date="2007" name="Genome Biol.">
        <title>Assembly of the Candida albicans genome into sixteen supercontigs aligned on the eight chromosomes.</title>
        <authorList>
            <person name="van het Hoog M."/>
            <person name="Rast T.J."/>
            <person name="Martchenko M."/>
            <person name="Grindle S."/>
            <person name="Dignard D."/>
            <person name="Hogues H."/>
            <person name="Cuomo C."/>
            <person name="Berriman M."/>
            <person name="Scherer S."/>
            <person name="Magee B.B."/>
            <person name="Whiteway M."/>
            <person name="Chibana H."/>
            <person name="Nantel A."/>
            <person name="Magee P.T."/>
        </authorList>
    </citation>
    <scope>GENOME REANNOTATION</scope>
    <source>
        <strain>SC5314 / ATCC MYA-2876</strain>
    </source>
</reference>
<reference key="3">
    <citation type="journal article" date="2013" name="Genome Biol.">
        <title>Assembly of a phased diploid Candida albicans genome facilitates allele-specific measurements and provides a simple model for repeat and indel structure.</title>
        <authorList>
            <person name="Muzzey D."/>
            <person name="Schwartz K."/>
            <person name="Weissman J.S."/>
            <person name="Sherlock G."/>
        </authorList>
    </citation>
    <scope>NUCLEOTIDE SEQUENCE [LARGE SCALE GENOMIC DNA]</scope>
    <scope>GENOME REANNOTATION</scope>
    <source>
        <strain>SC5314 / ATCC MYA-2876</strain>
    </source>
</reference>
<reference key="4">
    <citation type="journal article" date="2000" name="Yeast">
        <title>A phosphatidylinositol 3-kinase of Candida albicans: molecular cloning and characterization.</title>
        <authorList>
            <person name="Eck R."/>
            <person name="Bruckmann A."/>
            <person name="Wetzker R."/>
            <person name="Kunkel W."/>
        </authorList>
    </citation>
    <scope>INDUCTION</scope>
    <scope>FUNCTION</scope>
    <scope>CATALYTIC ACTIVITY</scope>
</reference>
<reference key="5">
    <citation type="journal article" date="2001" name="Yeast">
        <title>The deletion of CaVPS34 in the human pathogenic yeast Candida albicans causes defects in vesicle-mediated protein sorting and nuclear segregation.</title>
        <authorList>
            <person name="Bruckmann A."/>
            <person name="Kuenkel W."/>
            <person name="Augsten K."/>
            <person name="Wetzker R."/>
            <person name="Eck R."/>
        </authorList>
    </citation>
    <scope>FUNCTION</scope>
    <scope>DISRUPTION PHENOTYPE</scope>
</reference>
<reference key="6">
    <citation type="journal article" date="2005" name="Int. J. Med. Microbiol.">
        <title>The phosphatidylinositol 3-kinase Vps34p of the human pathogenic yeast Candida albicans is a multifunctional protein that interacts with the putative vacuolar H+ -ATPase subunit Vma7p.</title>
        <authorList>
            <person name="Eck R."/>
            <person name="Nguyen M."/>
            <person name="Guenther J."/>
            <person name="Kuenkel W."/>
            <person name="Zipfel P.F."/>
        </authorList>
    </citation>
    <scope>FUNCTION</scope>
    <scope>DISRUPTION PHENOTYPE</scope>
    <scope>INTERACTION WITH VMA7</scope>
</reference>
<reference key="7">
    <citation type="journal article" date="2005" name="Microbiology">
        <title>Generation and functional in vivo characterization of a lipid kinase defective phosphatidylinositol 3-kinase Vps34p of Candida albicans.</title>
        <authorList>
            <person name="Guenther J."/>
            <person name="Nguyen M."/>
            <person name="Haertl A."/>
            <person name="Kuenkel W."/>
            <person name="Zipfel P.F."/>
            <person name="Eck R."/>
        </authorList>
    </citation>
    <scope>FUNCTION</scope>
    <scope>CATALYTIC ACTIVITY</scope>
    <scope>PHOSPHORYLATION</scope>
    <scope>MUTAGENESIS OF 902-ASP--PRO-907</scope>
    <scope>DISRUPTION PHENOTYPE</scope>
</reference>
<feature type="chain" id="PRO_0000458854" description="Phosphatidylinositol 3-kinase VPS34">
    <location>
        <begin position="1"/>
        <end position="1020"/>
    </location>
</feature>
<feature type="domain" description="C2 PI3K-type" evidence="4">
    <location>
        <begin position="49"/>
        <end position="210"/>
    </location>
</feature>
<feature type="domain" description="PIK helical" evidence="3">
    <location>
        <begin position="331"/>
        <end position="577"/>
    </location>
</feature>
<feature type="domain" description="PI3K/PI4K catalytic" evidence="2">
    <location>
        <begin position="666"/>
        <end position="1004"/>
    </location>
</feature>
<feature type="region of interest" description="G-loop" evidence="2">
    <location>
        <begin position="672"/>
        <end position="678"/>
    </location>
</feature>
<feature type="region of interest" description="Catalytic loop" evidence="2">
    <location>
        <begin position="873"/>
        <end position="881"/>
    </location>
</feature>
<feature type="region of interest" description="Activation loop" evidence="2">
    <location>
        <begin position="892"/>
        <end position="913"/>
    </location>
</feature>
<feature type="mutagenesis site" description="Lacks lipid kinase activity but retains autophosphorylation activity." evidence="7">
    <original>DPKPFP</original>
    <variation>AILREKYPERV</variation>
    <location>
        <begin position="902"/>
        <end position="907"/>
    </location>
</feature>